<evidence type="ECO:0000255" key="1">
    <source>
        <dbReference type="HAMAP-Rule" id="MF_00237"/>
    </source>
</evidence>
<proteinExistence type="inferred from homology"/>
<dbReference type="EMBL" id="CP000539">
    <property type="protein sequence ID" value="ABM41026.1"/>
    <property type="molecule type" value="Genomic_DNA"/>
</dbReference>
<dbReference type="RefSeq" id="WP_011804231.1">
    <property type="nucleotide sequence ID" value="NZ_CP016278.1"/>
</dbReference>
<dbReference type="SMR" id="A1W451"/>
<dbReference type="STRING" id="232721.Ajs_0782"/>
<dbReference type="GeneID" id="84682696"/>
<dbReference type="KEGG" id="ajs:Ajs_0782"/>
<dbReference type="eggNOG" id="COG1826">
    <property type="taxonomic scope" value="Bacteria"/>
</dbReference>
<dbReference type="HOGENOM" id="CLU_086034_1_1_4"/>
<dbReference type="Proteomes" id="UP000000645">
    <property type="component" value="Chromosome"/>
</dbReference>
<dbReference type="GO" id="GO:0033281">
    <property type="term" value="C:TAT protein transport complex"/>
    <property type="evidence" value="ECO:0007669"/>
    <property type="project" value="UniProtKB-UniRule"/>
</dbReference>
<dbReference type="GO" id="GO:0008320">
    <property type="term" value="F:protein transmembrane transporter activity"/>
    <property type="evidence" value="ECO:0007669"/>
    <property type="project" value="UniProtKB-UniRule"/>
</dbReference>
<dbReference type="GO" id="GO:0043953">
    <property type="term" value="P:protein transport by the Tat complex"/>
    <property type="evidence" value="ECO:0007669"/>
    <property type="project" value="UniProtKB-UniRule"/>
</dbReference>
<dbReference type="Gene3D" id="1.20.5.3310">
    <property type="match status" value="1"/>
</dbReference>
<dbReference type="HAMAP" id="MF_00237">
    <property type="entry name" value="TatB"/>
    <property type="match status" value="1"/>
</dbReference>
<dbReference type="InterPro" id="IPR003369">
    <property type="entry name" value="TatA/B/E"/>
</dbReference>
<dbReference type="InterPro" id="IPR018448">
    <property type="entry name" value="TatB"/>
</dbReference>
<dbReference type="NCBIfam" id="TIGR01410">
    <property type="entry name" value="tatB"/>
    <property type="match status" value="1"/>
</dbReference>
<dbReference type="PANTHER" id="PTHR33162">
    <property type="entry name" value="SEC-INDEPENDENT PROTEIN TRANSLOCASE PROTEIN TATA, CHLOROPLASTIC"/>
    <property type="match status" value="1"/>
</dbReference>
<dbReference type="PANTHER" id="PTHR33162:SF1">
    <property type="entry name" value="SEC-INDEPENDENT PROTEIN TRANSLOCASE PROTEIN TATA, CHLOROPLASTIC"/>
    <property type="match status" value="1"/>
</dbReference>
<dbReference type="Pfam" id="PF02416">
    <property type="entry name" value="TatA_B_E"/>
    <property type="match status" value="1"/>
</dbReference>
<dbReference type="PRINTS" id="PR01506">
    <property type="entry name" value="TATBPROTEIN"/>
</dbReference>
<protein>
    <recommendedName>
        <fullName evidence="1">Sec-independent protein translocase protein TatB</fullName>
    </recommendedName>
</protein>
<accession>A1W451</accession>
<name>TATB_ACISJ</name>
<organism>
    <name type="scientific">Acidovorax sp. (strain JS42)</name>
    <dbReference type="NCBI Taxonomy" id="232721"/>
    <lineage>
        <taxon>Bacteria</taxon>
        <taxon>Pseudomonadati</taxon>
        <taxon>Pseudomonadota</taxon>
        <taxon>Betaproteobacteria</taxon>
        <taxon>Burkholderiales</taxon>
        <taxon>Comamonadaceae</taxon>
        <taxon>Acidovorax</taxon>
    </lineage>
</organism>
<reference key="1">
    <citation type="submission" date="2006-12" db="EMBL/GenBank/DDBJ databases">
        <title>Complete sequence of chromosome 1 of Acidovorax sp. JS42.</title>
        <authorList>
            <person name="Copeland A."/>
            <person name="Lucas S."/>
            <person name="Lapidus A."/>
            <person name="Barry K."/>
            <person name="Detter J.C."/>
            <person name="Glavina del Rio T."/>
            <person name="Dalin E."/>
            <person name="Tice H."/>
            <person name="Pitluck S."/>
            <person name="Chertkov O."/>
            <person name="Brettin T."/>
            <person name="Bruce D."/>
            <person name="Han C."/>
            <person name="Tapia R."/>
            <person name="Gilna P."/>
            <person name="Schmutz J."/>
            <person name="Larimer F."/>
            <person name="Land M."/>
            <person name="Hauser L."/>
            <person name="Kyrpides N."/>
            <person name="Kim E."/>
            <person name="Stahl D."/>
            <person name="Richardson P."/>
        </authorList>
    </citation>
    <scope>NUCLEOTIDE SEQUENCE [LARGE SCALE GENOMIC DNA]</scope>
    <source>
        <strain>JS42</strain>
    </source>
</reference>
<gene>
    <name evidence="1" type="primary">tatB</name>
    <name type="ordered locus">Ajs_0782</name>
</gene>
<sequence length="159" mass="17517">MIDIGLSKMALIGAVALIVIGPEKLPRVARTVGTLLGKAQRYVADVKAEVNRSMELDELRKMKDTVENAARDVEQTIHTSASDFQKDMEHSLGDASATGSTYGVDQGLSTVVPAYKHPAKNWRLKRGAMPQWYKARAGVRTRVQSGAARVARFRPQKFH</sequence>
<keyword id="KW-0997">Cell inner membrane</keyword>
<keyword id="KW-1003">Cell membrane</keyword>
<keyword id="KW-0472">Membrane</keyword>
<keyword id="KW-0653">Protein transport</keyword>
<keyword id="KW-0811">Translocation</keyword>
<keyword id="KW-0812">Transmembrane</keyword>
<keyword id="KW-1133">Transmembrane helix</keyword>
<keyword id="KW-0813">Transport</keyword>
<comment type="function">
    <text evidence="1">Part of the twin-arginine translocation (Tat) system that transports large folded proteins containing a characteristic twin-arginine motif in their signal peptide across membranes. Together with TatC, TatB is part of a receptor directly interacting with Tat signal peptides. TatB may form an oligomeric binding site that transiently accommodates folded Tat precursor proteins before their translocation.</text>
</comment>
<comment type="subunit">
    <text evidence="1">The Tat system comprises two distinct complexes: a TatABC complex, containing multiple copies of TatA, TatB and TatC subunits, and a separate TatA complex, containing only TatA subunits. Substrates initially bind to the TatABC complex, which probably triggers association of the separate TatA complex to form the active translocon.</text>
</comment>
<comment type="subcellular location">
    <subcellularLocation>
        <location evidence="1">Cell inner membrane</location>
        <topology evidence="1">Single-pass membrane protein</topology>
    </subcellularLocation>
</comment>
<comment type="similarity">
    <text evidence="1">Belongs to the TatB family.</text>
</comment>
<feature type="chain" id="PRO_0000301133" description="Sec-independent protein translocase protein TatB">
    <location>
        <begin position="1"/>
        <end position="159"/>
    </location>
</feature>
<feature type="transmembrane region" description="Helical" evidence="1">
    <location>
        <begin position="1"/>
        <end position="21"/>
    </location>
</feature>